<feature type="chain" id="PRO_0000216578" description="Photosystem II reaction center protein J">
    <location>
        <begin position="1"/>
        <end position="40"/>
    </location>
</feature>
<feature type="transmembrane region" description="Helical" evidence="1">
    <location>
        <begin position="8"/>
        <end position="28"/>
    </location>
</feature>
<dbReference type="EMBL" id="AB086179">
    <property type="protein sequence ID" value="BAC55363.1"/>
    <property type="molecule type" value="Genomic_DNA"/>
</dbReference>
<dbReference type="EMBL" id="AB087455">
    <property type="protein sequence ID" value="BAC55459.1"/>
    <property type="molecule type" value="mRNA"/>
</dbReference>
<dbReference type="RefSeq" id="NP_777427.1">
    <property type="nucleotide sequence ID" value="NC_004543.1"/>
</dbReference>
<dbReference type="SMR" id="Q85CD4"/>
<dbReference type="GeneID" id="2553404"/>
<dbReference type="GO" id="GO:0009535">
    <property type="term" value="C:chloroplast thylakoid membrane"/>
    <property type="evidence" value="ECO:0007669"/>
    <property type="project" value="UniProtKB-SubCell"/>
</dbReference>
<dbReference type="GO" id="GO:0009539">
    <property type="term" value="C:photosystem II reaction center"/>
    <property type="evidence" value="ECO:0007669"/>
    <property type="project" value="InterPro"/>
</dbReference>
<dbReference type="GO" id="GO:0015979">
    <property type="term" value="P:photosynthesis"/>
    <property type="evidence" value="ECO:0007669"/>
    <property type="project" value="UniProtKB-UniRule"/>
</dbReference>
<dbReference type="Gene3D" id="6.10.250.2070">
    <property type="match status" value="1"/>
</dbReference>
<dbReference type="HAMAP" id="MF_01305">
    <property type="entry name" value="PSII_PsbJ"/>
    <property type="match status" value="1"/>
</dbReference>
<dbReference type="InterPro" id="IPR002682">
    <property type="entry name" value="PSII_PsbJ"/>
</dbReference>
<dbReference type="InterPro" id="IPR037267">
    <property type="entry name" value="PSII_PsbJ_sf"/>
</dbReference>
<dbReference type="NCBIfam" id="NF002722">
    <property type="entry name" value="PRK02565.1"/>
    <property type="match status" value="1"/>
</dbReference>
<dbReference type="PANTHER" id="PTHR34812">
    <property type="entry name" value="PHOTOSYSTEM II REACTION CENTER PROTEIN J"/>
    <property type="match status" value="1"/>
</dbReference>
<dbReference type="PANTHER" id="PTHR34812:SF3">
    <property type="entry name" value="PHOTOSYSTEM II REACTION CENTER PROTEIN J"/>
    <property type="match status" value="1"/>
</dbReference>
<dbReference type="Pfam" id="PF01788">
    <property type="entry name" value="PsbJ"/>
    <property type="match status" value="1"/>
</dbReference>
<dbReference type="SUPFAM" id="SSF161021">
    <property type="entry name" value="Photosystem II reaction center protein J, PsbJ"/>
    <property type="match status" value="1"/>
</dbReference>
<geneLocation type="chloroplast"/>
<evidence type="ECO:0000255" key="1">
    <source>
        <dbReference type="HAMAP-Rule" id="MF_01305"/>
    </source>
</evidence>
<evidence type="ECO:0000269" key="2">
    <source>
    </source>
</evidence>
<evidence type="ECO:0000269" key="3">
    <source>
    </source>
</evidence>
<gene>
    <name evidence="1" type="primary">psbJ</name>
</gene>
<comment type="function">
    <text evidence="1">One of the components of the core complex of photosystem II (PSII). PSII is a light-driven water:plastoquinone oxidoreductase that uses light energy to abstract electrons from H(2)O, generating O(2) and a proton gradient subsequently used for ATP formation. It consists of a core antenna complex that captures photons, and an electron transfer chain that converts photonic excitation into a charge separation.</text>
</comment>
<comment type="subunit">
    <text evidence="1">PSII is composed of 1 copy each of membrane proteins PsbA, PsbB, PsbC, PsbD, PsbE, PsbF, PsbH, PsbI, PsbJ, PsbK, PsbL, PsbM, PsbT, PsbX, PsbY, PsbZ, Psb30/Ycf12, at least 3 peripheral proteins of the oxygen-evolving complex and a large number of cofactors. It forms dimeric complexes.</text>
</comment>
<comment type="subcellular location">
    <subcellularLocation>
        <location evidence="1">Plastid</location>
        <location evidence="1">Chloroplast thylakoid membrane</location>
        <topology evidence="1">Single-pass membrane protein</topology>
    </subcellularLocation>
</comment>
<comment type="RNA editing">
    <location>
        <position position="29" evidence="2 3"/>
    </location>
    <location>
        <position position="30" evidence="2 3"/>
    </location>
    <location>
        <position position="33" evidence="2 3"/>
    </location>
</comment>
<comment type="similarity">
    <text evidence="1">Belongs to the PsbJ family.</text>
</comment>
<organism>
    <name type="scientific">Anthoceros angustus</name>
    <name type="common">Hornwort</name>
    <name type="synonym">Anthoceros formosae</name>
    <dbReference type="NCBI Taxonomy" id="48387"/>
    <lineage>
        <taxon>Eukaryota</taxon>
        <taxon>Viridiplantae</taxon>
        <taxon>Streptophyta</taxon>
        <taxon>Embryophyta</taxon>
        <taxon>Anthocerotophyta</taxon>
        <taxon>Anthocerotopsida</taxon>
        <taxon>Anthocerotidae</taxon>
        <taxon>Anthocerotales</taxon>
        <taxon>Anthocerotaceae</taxon>
        <taxon>Anthoceros</taxon>
    </lineage>
</organism>
<proteinExistence type="evidence at transcript level"/>
<sequence>MANTTGRIPLWLIGTIAGILVIGLVGIFFYGSYSGLGSSL</sequence>
<protein>
    <recommendedName>
        <fullName evidence="1">Photosystem II reaction center protein J</fullName>
        <shortName evidence="1">PSII-J</shortName>
    </recommendedName>
</protein>
<accession>Q85CD4</accession>
<reference key="1">
    <citation type="journal article" date="2003" name="Nucleic Acids Res.">
        <title>The complete nucleotide sequence of the hornwort (Anthoceros formosae) chloroplast genome: insight into the earliest land plants.</title>
        <authorList>
            <person name="Kugita M."/>
            <person name="Kaneko A."/>
            <person name="Yamamoto Y."/>
            <person name="Takeya Y."/>
            <person name="Matsumoto T."/>
            <person name="Yoshinaga K."/>
        </authorList>
    </citation>
    <scope>NUCLEOTIDE SEQUENCE [LARGE SCALE GENOMIC DNA]</scope>
    <scope>RNA EDITING</scope>
</reference>
<reference key="2">
    <citation type="journal article" date="2003" name="Nucleic Acids Res.">
        <title>RNA editing in hornwort chloroplasts makes more than half the genes functional.</title>
        <authorList>
            <person name="Kugita M."/>
            <person name="Yamamoto Y."/>
            <person name="Fujikawa T."/>
            <person name="Matsumoto T."/>
            <person name="Yoshinaga K."/>
        </authorList>
    </citation>
    <scope>NUCLEOTIDE SEQUENCE [MRNA]</scope>
    <scope>RNA EDITING</scope>
    <source>
        <tissue>Thallus</tissue>
    </source>
</reference>
<name>PSBJ_ANTAG</name>
<keyword id="KW-0150">Chloroplast</keyword>
<keyword id="KW-0472">Membrane</keyword>
<keyword id="KW-0602">Photosynthesis</keyword>
<keyword id="KW-0604">Photosystem II</keyword>
<keyword id="KW-0934">Plastid</keyword>
<keyword id="KW-0674">Reaction center</keyword>
<keyword id="KW-0691">RNA editing</keyword>
<keyword id="KW-0793">Thylakoid</keyword>
<keyword id="KW-0812">Transmembrane</keyword>
<keyword id="KW-1133">Transmembrane helix</keyword>